<proteinExistence type="predicted"/>
<evidence type="ECO:0000255" key="1">
    <source>
        <dbReference type="PROSITE-ProRule" id="PRU00345"/>
    </source>
</evidence>
<keyword id="KW-0238">DNA-binding</keyword>
<keyword id="KW-1185">Reference proteome</keyword>
<keyword id="KW-0804">Transcription</keyword>
<keyword id="KW-0805">Transcription regulation</keyword>
<protein>
    <recommendedName>
        <fullName>Uncharacterized HTH-type transcriptional regulator YcgE</fullName>
    </recommendedName>
</protein>
<dbReference type="EMBL" id="AL009126">
    <property type="protein sequence ID" value="CAB12102.2"/>
    <property type="molecule type" value="Genomic_DNA"/>
</dbReference>
<dbReference type="PIR" id="H69757">
    <property type="entry name" value="H69757"/>
</dbReference>
<dbReference type="RefSeq" id="NP_388190.2">
    <property type="nucleotide sequence ID" value="NC_000964.3"/>
</dbReference>
<dbReference type="RefSeq" id="WP_003246360.1">
    <property type="nucleotide sequence ID" value="NZ_OZ025638.1"/>
</dbReference>
<dbReference type="SMR" id="O31472"/>
<dbReference type="FunCoup" id="O31472">
    <property type="interactions" value="189"/>
</dbReference>
<dbReference type="STRING" id="224308.BSU03080"/>
<dbReference type="PaxDb" id="224308-BSU03080"/>
<dbReference type="EnsemblBacteria" id="CAB12102">
    <property type="protein sequence ID" value="CAB12102"/>
    <property type="gene ID" value="BSU_03080"/>
</dbReference>
<dbReference type="GeneID" id="938352"/>
<dbReference type="KEGG" id="bsu:BSU03080"/>
<dbReference type="PATRIC" id="fig|224308.179.peg.322"/>
<dbReference type="eggNOG" id="COG1846">
    <property type="taxonomic scope" value="Bacteria"/>
</dbReference>
<dbReference type="InParanoid" id="O31472"/>
<dbReference type="OrthoDB" id="162531at2"/>
<dbReference type="PhylomeDB" id="O31472"/>
<dbReference type="BioCyc" id="BSUB:BSU03080-MONOMER"/>
<dbReference type="Proteomes" id="UP000001570">
    <property type="component" value="Chromosome"/>
</dbReference>
<dbReference type="GO" id="GO:0003677">
    <property type="term" value="F:DNA binding"/>
    <property type="evidence" value="ECO:0007669"/>
    <property type="project" value="UniProtKB-KW"/>
</dbReference>
<dbReference type="GO" id="GO:0003700">
    <property type="term" value="F:DNA-binding transcription factor activity"/>
    <property type="evidence" value="ECO:0007669"/>
    <property type="project" value="InterPro"/>
</dbReference>
<dbReference type="GO" id="GO:0006355">
    <property type="term" value="P:regulation of DNA-templated transcription"/>
    <property type="evidence" value="ECO:0000318"/>
    <property type="project" value="GO_Central"/>
</dbReference>
<dbReference type="GO" id="GO:0006950">
    <property type="term" value="P:response to stress"/>
    <property type="evidence" value="ECO:0000318"/>
    <property type="project" value="GO_Central"/>
</dbReference>
<dbReference type="CDD" id="cd00090">
    <property type="entry name" value="HTH_ARSR"/>
    <property type="match status" value="1"/>
</dbReference>
<dbReference type="Gene3D" id="1.10.10.10">
    <property type="entry name" value="Winged helix-like DNA-binding domain superfamily/Winged helix DNA-binding domain"/>
    <property type="match status" value="1"/>
</dbReference>
<dbReference type="InterPro" id="IPR011991">
    <property type="entry name" value="ArsR-like_HTH"/>
</dbReference>
<dbReference type="InterPro" id="IPR000835">
    <property type="entry name" value="HTH_MarR-typ"/>
</dbReference>
<dbReference type="InterPro" id="IPR039422">
    <property type="entry name" value="MarR/SlyA-like"/>
</dbReference>
<dbReference type="InterPro" id="IPR036388">
    <property type="entry name" value="WH-like_DNA-bd_sf"/>
</dbReference>
<dbReference type="InterPro" id="IPR036390">
    <property type="entry name" value="WH_DNA-bd_sf"/>
</dbReference>
<dbReference type="PANTHER" id="PTHR33164">
    <property type="entry name" value="TRANSCRIPTIONAL REGULATOR, MARR FAMILY"/>
    <property type="match status" value="1"/>
</dbReference>
<dbReference type="PANTHER" id="PTHR33164:SF106">
    <property type="entry name" value="TRANSCRIPTIONAL REGULATORY PROTEIN"/>
    <property type="match status" value="1"/>
</dbReference>
<dbReference type="Pfam" id="PF01047">
    <property type="entry name" value="MarR"/>
    <property type="match status" value="1"/>
</dbReference>
<dbReference type="PRINTS" id="PR00598">
    <property type="entry name" value="HTHMARR"/>
</dbReference>
<dbReference type="SMART" id="SM00347">
    <property type="entry name" value="HTH_MARR"/>
    <property type="match status" value="1"/>
</dbReference>
<dbReference type="SUPFAM" id="SSF46785">
    <property type="entry name" value="Winged helix' DNA-binding domain"/>
    <property type="match status" value="1"/>
</dbReference>
<dbReference type="PROSITE" id="PS50995">
    <property type="entry name" value="HTH_MARR_2"/>
    <property type="match status" value="1"/>
</dbReference>
<reference key="1">
    <citation type="journal article" date="1997" name="Nature">
        <title>The complete genome sequence of the Gram-positive bacterium Bacillus subtilis.</title>
        <authorList>
            <person name="Kunst F."/>
            <person name="Ogasawara N."/>
            <person name="Moszer I."/>
            <person name="Albertini A.M."/>
            <person name="Alloni G."/>
            <person name="Azevedo V."/>
            <person name="Bertero M.G."/>
            <person name="Bessieres P."/>
            <person name="Bolotin A."/>
            <person name="Borchert S."/>
            <person name="Borriss R."/>
            <person name="Boursier L."/>
            <person name="Brans A."/>
            <person name="Braun M."/>
            <person name="Brignell S.C."/>
            <person name="Bron S."/>
            <person name="Brouillet S."/>
            <person name="Bruschi C.V."/>
            <person name="Caldwell B."/>
            <person name="Capuano V."/>
            <person name="Carter N.M."/>
            <person name="Choi S.-K."/>
            <person name="Codani J.-J."/>
            <person name="Connerton I.F."/>
            <person name="Cummings N.J."/>
            <person name="Daniel R.A."/>
            <person name="Denizot F."/>
            <person name="Devine K.M."/>
            <person name="Duesterhoeft A."/>
            <person name="Ehrlich S.D."/>
            <person name="Emmerson P.T."/>
            <person name="Entian K.-D."/>
            <person name="Errington J."/>
            <person name="Fabret C."/>
            <person name="Ferrari E."/>
            <person name="Foulger D."/>
            <person name="Fritz C."/>
            <person name="Fujita M."/>
            <person name="Fujita Y."/>
            <person name="Fuma S."/>
            <person name="Galizzi A."/>
            <person name="Galleron N."/>
            <person name="Ghim S.-Y."/>
            <person name="Glaser P."/>
            <person name="Goffeau A."/>
            <person name="Golightly E.J."/>
            <person name="Grandi G."/>
            <person name="Guiseppi G."/>
            <person name="Guy B.J."/>
            <person name="Haga K."/>
            <person name="Haiech J."/>
            <person name="Harwood C.R."/>
            <person name="Henaut A."/>
            <person name="Hilbert H."/>
            <person name="Holsappel S."/>
            <person name="Hosono S."/>
            <person name="Hullo M.-F."/>
            <person name="Itaya M."/>
            <person name="Jones L.-M."/>
            <person name="Joris B."/>
            <person name="Karamata D."/>
            <person name="Kasahara Y."/>
            <person name="Klaerr-Blanchard M."/>
            <person name="Klein C."/>
            <person name="Kobayashi Y."/>
            <person name="Koetter P."/>
            <person name="Koningstein G."/>
            <person name="Krogh S."/>
            <person name="Kumano M."/>
            <person name="Kurita K."/>
            <person name="Lapidus A."/>
            <person name="Lardinois S."/>
            <person name="Lauber J."/>
            <person name="Lazarevic V."/>
            <person name="Lee S.-M."/>
            <person name="Levine A."/>
            <person name="Liu H."/>
            <person name="Masuda S."/>
            <person name="Mauel C."/>
            <person name="Medigue C."/>
            <person name="Medina N."/>
            <person name="Mellado R.P."/>
            <person name="Mizuno M."/>
            <person name="Moestl D."/>
            <person name="Nakai S."/>
            <person name="Noback M."/>
            <person name="Noone D."/>
            <person name="O'Reilly M."/>
            <person name="Ogawa K."/>
            <person name="Ogiwara A."/>
            <person name="Oudega B."/>
            <person name="Park S.-H."/>
            <person name="Parro V."/>
            <person name="Pohl T.M."/>
            <person name="Portetelle D."/>
            <person name="Porwollik S."/>
            <person name="Prescott A.M."/>
            <person name="Presecan E."/>
            <person name="Pujic P."/>
            <person name="Purnelle B."/>
            <person name="Rapoport G."/>
            <person name="Rey M."/>
            <person name="Reynolds S."/>
            <person name="Rieger M."/>
            <person name="Rivolta C."/>
            <person name="Rocha E."/>
            <person name="Roche B."/>
            <person name="Rose M."/>
            <person name="Sadaie Y."/>
            <person name="Sato T."/>
            <person name="Scanlan E."/>
            <person name="Schleich S."/>
            <person name="Schroeter R."/>
            <person name="Scoffone F."/>
            <person name="Sekiguchi J."/>
            <person name="Sekowska A."/>
            <person name="Seror S.J."/>
            <person name="Serror P."/>
            <person name="Shin B.-S."/>
            <person name="Soldo B."/>
            <person name="Sorokin A."/>
            <person name="Tacconi E."/>
            <person name="Takagi T."/>
            <person name="Takahashi H."/>
            <person name="Takemaru K."/>
            <person name="Takeuchi M."/>
            <person name="Tamakoshi A."/>
            <person name="Tanaka T."/>
            <person name="Terpstra P."/>
            <person name="Tognoni A."/>
            <person name="Tosato V."/>
            <person name="Uchiyama S."/>
            <person name="Vandenbol M."/>
            <person name="Vannier F."/>
            <person name="Vassarotti A."/>
            <person name="Viari A."/>
            <person name="Wambutt R."/>
            <person name="Wedler E."/>
            <person name="Wedler H."/>
            <person name="Weitzenegger T."/>
            <person name="Winters P."/>
            <person name="Wipat A."/>
            <person name="Yamamoto H."/>
            <person name="Yamane K."/>
            <person name="Yasumoto K."/>
            <person name="Yata K."/>
            <person name="Yoshida K."/>
            <person name="Yoshikawa H.-F."/>
            <person name="Zumstein E."/>
            <person name="Yoshikawa H."/>
            <person name="Danchin A."/>
        </authorList>
    </citation>
    <scope>NUCLEOTIDE SEQUENCE [LARGE SCALE GENOMIC DNA]</scope>
    <source>
        <strain>168</strain>
    </source>
</reference>
<reference key="2">
    <citation type="journal article" date="2009" name="Microbiology">
        <title>From a consortium sequence to a unified sequence: the Bacillus subtilis 168 reference genome a decade later.</title>
        <authorList>
            <person name="Barbe V."/>
            <person name="Cruveiller S."/>
            <person name="Kunst F."/>
            <person name="Lenoble P."/>
            <person name="Meurice G."/>
            <person name="Sekowska A."/>
            <person name="Vallenet D."/>
            <person name="Wang T."/>
            <person name="Moszer I."/>
            <person name="Medigue C."/>
            <person name="Danchin A."/>
        </authorList>
    </citation>
    <scope>SEQUENCE REVISION TO 83-89</scope>
</reference>
<accession>O31472</accession>
<organism>
    <name type="scientific">Bacillus subtilis (strain 168)</name>
    <dbReference type="NCBI Taxonomy" id="224308"/>
    <lineage>
        <taxon>Bacteria</taxon>
        <taxon>Bacillati</taxon>
        <taxon>Bacillota</taxon>
        <taxon>Bacilli</taxon>
        <taxon>Bacillales</taxon>
        <taxon>Bacillaceae</taxon>
        <taxon>Bacillus</taxon>
    </lineage>
</organism>
<name>YCGE_BACSU</name>
<gene>
    <name type="primary">ycgE</name>
    <name type="ordered locus">BSU03080</name>
</gene>
<feature type="chain" id="PRO_0000360574" description="Uncharacterized HTH-type transcriptional regulator YcgE">
    <location>
        <begin position="1"/>
        <end position="154"/>
    </location>
</feature>
<feature type="domain" description="HTH marR-type" evidence="1">
    <location>
        <begin position="7"/>
        <end position="143"/>
    </location>
</feature>
<feature type="DNA-binding region" description="H-T-H motif" evidence="1">
    <location>
        <begin position="57"/>
        <end position="80"/>
    </location>
</feature>
<sequence length="154" mass="17183">MSTRNSRSELEKTAVQLFRKLGTRTVLFHQAAAQALGLFPTDLKSADILNEAGPMTAGELGKKTGLSTGSVTALVDRLEKAGYVAREKDPNDRRRVVIVPLTASKKHIKDLFRPLSESTMDLCREYTEEELELIFSFVGKAADIMEEELERLKQ</sequence>